<protein>
    <recommendedName>
        <fullName evidence="1">Ion-translocating oxidoreductase complex subunit E</fullName>
        <ecNumber evidence="1">7.-.-.-</ecNumber>
    </recommendedName>
    <alternativeName>
        <fullName evidence="1">Rsx electron transport complex subunit E</fullName>
    </alternativeName>
</protein>
<feature type="chain" id="PRO_0000214279" description="Ion-translocating oxidoreductase complex subunit E">
    <location>
        <begin position="1"/>
        <end position="230"/>
    </location>
</feature>
<feature type="transmembrane region" description="Helical" evidence="1">
    <location>
        <begin position="18"/>
        <end position="38"/>
    </location>
</feature>
<feature type="transmembrane region" description="Helical" evidence="1">
    <location>
        <begin position="39"/>
        <end position="59"/>
    </location>
</feature>
<feature type="transmembrane region" description="Helical" evidence="1">
    <location>
        <begin position="63"/>
        <end position="83"/>
    </location>
</feature>
<feature type="transmembrane region" description="Helical" evidence="1">
    <location>
        <begin position="86"/>
        <end position="106"/>
    </location>
</feature>
<feature type="transmembrane region" description="Helical" evidence="1">
    <location>
        <begin position="125"/>
        <end position="145"/>
    </location>
</feature>
<feature type="transmembrane region" description="Helical" evidence="1">
    <location>
        <begin position="182"/>
        <end position="202"/>
    </location>
</feature>
<name>RSXE_SALTY</name>
<gene>
    <name evidence="1" type="primary">rsxE</name>
    <name type="ordered locus">STM1454</name>
</gene>
<comment type="function">
    <text evidence="1">Part of a membrane-bound complex that couples electron transfer with translocation of ions across the membrane. Required to maintain the reduced state of SoxR.</text>
</comment>
<comment type="subunit">
    <text evidence="1">The complex is composed of six subunits: RsxA, RsxB, RsxC, RsxD, RsxE and RsxG.</text>
</comment>
<comment type="subcellular location">
    <subcellularLocation>
        <location evidence="1">Cell inner membrane</location>
        <topology evidence="1">Multi-pass membrane protein</topology>
    </subcellularLocation>
</comment>
<comment type="similarity">
    <text evidence="1">Belongs to the NqrDE/RnfAE family.</text>
</comment>
<proteinExistence type="inferred from homology"/>
<reference key="1">
    <citation type="journal article" date="2001" name="Nature">
        <title>Complete genome sequence of Salmonella enterica serovar Typhimurium LT2.</title>
        <authorList>
            <person name="McClelland M."/>
            <person name="Sanderson K.E."/>
            <person name="Spieth J."/>
            <person name="Clifton S.W."/>
            <person name="Latreille P."/>
            <person name="Courtney L."/>
            <person name="Porwollik S."/>
            <person name="Ali J."/>
            <person name="Dante M."/>
            <person name="Du F."/>
            <person name="Hou S."/>
            <person name="Layman D."/>
            <person name="Leonard S."/>
            <person name="Nguyen C."/>
            <person name="Scott K."/>
            <person name="Holmes A."/>
            <person name="Grewal N."/>
            <person name="Mulvaney E."/>
            <person name="Ryan E."/>
            <person name="Sun H."/>
            <person name="Florea L."/>
            <person name="Miller W."/>
            <person name="Stoneking T."/>
            <person name="Nhan M."/>
            <person name="Waterston R."/>
            <person name="Wilson R.K."/>
        </authorList>
    </citation>
    <scope>NUCLEOTIDE SEQUENCE [LARGE SCALE GENOMIC DNA]</scope>
    <source>
        <strain>LT2 / SGSC1412 / ATCC 700720</strain>
    </source>
</reference>
<evidence type="ECO:0000255" key="1">
    <source>
        <dbReference type="HAMAP-Rule" id="MF_00478"/>
    </source>
</evidence>
<dbReference type="EC" id="7.-.-.-" evidence="1"/>
<dbReference type="EMBL" id="AE006468">
    <property type="protein sequence ID" value="AAL20376.1"/>
    <property type="molecule type" value="Genomic_DNA"/>
</dbReference>
<dbReference type="RefSeq" id="WP_001289628.1">
    <property type="nucleotide sequence ID" value="NC_003197.2"/>
</dbReference>
<dbReference type="SMR" id="P65540"/>
<dbReference type="STRING" id="99287.STM1454"/>
<dbReference type="PaxDb" id="99287-STM1454"/>
<dbReference type="KEGG" id="stm:STM1454"/>
<dbReference type="PATRIC" id="fig|99287.12.peg.1537"/>
<dbReference type="HOGENOM" id="CLU_046659_1_0_6"/>
<dbReference type="OMA" id="RIEVFHT"/>
<dbReference type="PhylomeDB" id="P65540"/>
<dbReference type="BioCyc" id="SENT99287:STM1454-MONOMER"/>
<dbReference type="Proteomes" id="UP000001014">
    <property type="component" value="Chromosome"/>
</dbReference>
<dbReference type="GO" id="GO:0005886">
    <property type="term" value="C:plasma membrane"/>
    <property type="evidence" value="ECO:0000318"/>
    <property type="project" value="GO_Central"/>
</dbReference>
<dbReference type="GO" id="GO:0022900">
    <property type="term" value="P:electron transport chain"/>
    <property type="evidence" value="ECO:0007669"/>
    <property type="project" value="UniProtKB-UniRule"/>
</dbReference>
<dbReference type="HAMAP" id="MF_00478">
    <property type="entry name" value="RsxE_RnfE"/>
    <property type="match status" value="1"/>
</dbReference>
<dbReference type="InterPro" id="IPR003667">
    <property type="entry name" value="NqrDE/RnfAE"/>
</dbReference>
<dbReference type="InterPro" id="IPR010968">
    <property type="entry name" value="RnfE"/>
</dbReference>
<dbReference type="NCBIfam" id="NF009070">
    <property type="entry name" value="PRK12405.1"/>
    <property type="match status" value="1"/>
</dbReference>
<dbReference type="NCBIfam" id="TIGR01948">
    <property type="entry name" value="rnfE"/>
    <property type="match status" value="1"/>
</dbReference>
<dbReference type="PANTHER" id="PTHR30586">
    <property type="entry name" value="ELECTRON TRANSPORT COMPLEX PROTEIN RNFE"/>
    <property type="match status" value="1"/>
</dbReference>
<dbReference type="PANTHER" id="PTHR30586:SF0">
    <property type="entry name" value="ION-TRANSLOCATING OXIDOREDUCTASE COMPLEX SUBUNIT E"/>
    <property type="match status" value="1"/>
</dbReference>
<dbReference type="Pfam" id="PF02508">
    <property type="entry name" value="Rnf-Nqr"/>
    <property type="match status" value="1"/>
</dbReference>
<dbReference type="PIRSF" id="PIRSF006102">
    <property type="entry name" value="NQR_DE"/>
    <property type="match status" value="1"/>
</dbReference>
<accession>P65540</accession>
<accession>Q8XEX9</accession>
<keyword id="KW-0997">Cell inner membrane</keyword>
<keyword id="KW-1003">Cell membrane</keyword>
<keyword id="KW-0249">Electron transport</keyword>
<keyword id="KW-0472">Membrane</keyword>
<keyword id="KW-1185">Reference proteome</keyword>
<keyword id="KW-1278">Translocase</keyword>
<keyword id="KW-0812">Transmembrane</keyword>
<keyword id="KW-1133">Transmembrane helix</keyword>
<keyword id="KW-0813">Transport</keyword>
<organism>
    <name type="scientific">Salmonella typhimurium (strain LT2 / SGSC1412 / ATCC 700720)</name>
    <dbReference type="NCBI Taxonomy" id="99287"/>
    <lineage>
        <taxon>Bacteria</taxon>
        <taxon>Pseudomonadati</taxon>
        <taxon>Pseudomonadota</taxon>
        <taxon>Gammaproteobacteria</taxon>
        <taxon>Enterobacterales</taxon>
        <taxon>Enterobacteriaceae</taxon>
        <taxon>Salmonella</taxon>
    </lineage>
</organism>
<sequence>MSEIKDIVVQGLWKNNSALVQLLGLCPLLAVTSTATNALGLGLATTLVLTLTNLTVSALRRWTPAEIRIPIYVMIIASVVSAVQMLINAYAFGLYQSLGIFIPLIVTNCIVVGRAEAFAAKKGPWLSALDGFSIGMGATGAMFVLGSLREILGNGTLFDGADSLLGGWAKVLRVEIFHTDSPFLLAMLPPGAFIGLGLMLAVKYLIDEKMKKRRAETAPSAVPAGETGKV</sequence>